<keyword id="KW-0560">Oxidoreductase</keyword>
<keyword id="KW-0663">Pyridoxal phosphate</keyword>
<keyword id="KW-1185">Reference proteome</keyword>
<comment type="function">
    <text evidence="1">The glycine cleavage system catalyzes the degradation of glycine. The P protein binds the alpha-amino group of glycine through its pyridoxal phosphate cofactor; CO(2) is released and the remaining methylamine moiety is then transferred to the lipoamide cofactor of the H protein.</text>
</comment>
<comment type="catalytic activity">
    <reaction evidence="1">
        <text>N(6)-[(R)-lipoyl]-L-lysyl-[glycine-cleavage complex H protein] + glycine + H(+) = N(6)-[(R)-S(8)-aminomethyldihydrolipoyl]-L-lysyl-[glycine-cleavage complex H protein] + CO2</text>
        <dbReference type="Rhea" id="RHEA:24304"/>
        <dbReference type="Rhea" id="RHEA-COMP:10494"/>
        <dbReference type="Rhea" id="RHEA-COMP:10495"/>
        <dbReference type="ChEBI" id="CHEBI:15378"/>
        <dbReference type="ChEBI" id="CHEBI:16526"/>
        <dbReference type="ChEBI" id="CHEBI:57305"/>
        <dbReference type="ChEBI" id="CHEBI:83099"/>
        <dbReference type="ChEBI" id="CHEBI:83143"/>
        <dbReference type="EC" id="1.4.4.2"/>
    </reaction>
</comment>
<comment type="cofactor">
    <cofactor evidence="1">
        <name>pyridoxal 5'-phosphate</name>
        <dbReference type="ChEBI" id="CHEBI:597326"/>
    </cofactor>
</comment>
<comment type="subunit">
    <text evidence="1">The glycine cleavage system is composed of four proteins: P, T, L and H.</text>
</comment>
<comment type="similarity">
    <text evidence="1">Belongs to the GcvP family.</text>
</comment>
<name>GCSP_SHEAM</name>
<feature type="chain" id="PRO_1000045606" description="Glycine dehydrogenase (decarboxylating)">
    <location>
        <begin position="1"/>
        <end position="962"/>
    </location>
</feature>
<feature type="modified residue" description="N6-(pyridoxal phosphate)lysine" evidence="1">
    <location>
        <position position="709"/>
    </location>
</feature>
<gene>
    <name evidence="1" type="primary">gcvP</name>
    <name type="ordered locus">Sama_2719</name>
</gene>
<organism>
    <name type="scientific">Shewanella amazonensis (strain ATCC BAA-1098 / SB2B)</name>
    <dbReference type="NCBI Taxonomy" id="326297"/>
    <lineage>
        <taxon>Bacteria</taxon>
        <taxon>Pseudomonadati</taxon>
        <taxon>Pseudomonadota</taxon>
        <taxon>Gammaproteobacteria</taxon>
        <taxon>Alteromonadales</taxon>
        <taxon>Shewanellaceae</taxon>
        <taxon>Shewanella</taxon>
    </lineage>
</organism>
<accession>A1S965</accession>
<dbReference type="EC" id="1.4.4.2" evidence="1"/>
<dbReference type="EMBL" id="CP000507">
    <property type="protein sequence ID" value="ABM00922.1"/>
    <property type="molecule type" value="Genomic_DNA"/>
</dbReference>
<dbReference type="RefSeq" id="WP_011760827.1">
    <property type="nucleotide sequence ID" value="NC_008700.1"/>
</dbReference>
<dbReference type="SMR" id="A1S965"/>
<dbReference type="STRING" id="326297.Sama_2719"/>
<dbReference type="KEGG" id="saz:Sama_2719"/>
<dbReference type="eggNOG" id="COG0403">
    <property type="taxonomic scope" value="Bacteria"/>
</dbReference>
<dbReference type="eggNOG" id="COG1003">
    <property type="taxonomic scope" value="Bacteria"/>
</dbReference>
<dbReference type="HOGENOM" id="CLU_004620_3_2_6"/>
<dbReference type="OrthoDB" id="9801272at2"/>
<dbReference type="Proteomes" id="UP000009175">
    <property type="component" value="Chromosome"/>
</dbReference>
<dbReference type="GO" id="GO:0005829">
    <property type="term" value="C:cytosol"/>
    <property type="evidence" value="ECO:0007669"/>
    <property type="project" value="TreeGrafter"/>
</dbReference>
<dbReference type="GO" id="GO:0005960">
    <property type="term" value="C:glycine cleavage complex"/>
    <property type="evidence" value="ECO:0007669"/>
    <property type="project" value="TreeGrafter"/>
</dbReference>
<dbReference type="GO" id="GO:0016594">
    <property type="term" value="F:glycine binding"/>
    <property type="evidence" value="ECO:0007669"/>
    <property type="project" value="TreeGrafter"/>
</dbReference>
<dbReference type="GO" id="GO:0004375">
    <property type="term" value="F:glycine dehydrogenase (decarboxylating) activity"/>
    <property type="evidence" value="ECO:0007669"/>
    <property type="project" value="UniProtKB-EC"/>
</dbReference>
<dbReference type="GO" id="GO:0030170">
    <property type="term" value="F:pyridoxal phosphate binding"/>
    <property type="evidence" value="ECO:0007669"/>
    <property type="project" value="TreeGrafter"/>
</dbReference>
<dbReference type="GO" id="GO:0019464">
    <property type="term" value="P:glycine decarboxylation via glycine cleavage system"/>
    <property type="evidence" value="ECO:0007669"/>
    <property type="project" value="UniProtKB-UniRule"/>
</dbReference>
<dbReference type="CDD" id="cd00613">
    <property type="entry name" value="GDC-P"/>
    <property type="match status" value="2"/>
</dbReference>
<dbReference type="FunFam" id="3.40.640.10:FF:000005">
    <property type="entry name" value="Glycine dehydrogenase (decarboxylating), mitochondrial"/>
    <property type="match status" value="1"/>
</dbReference>
<dbReference type="FunFam" id="3.90.1150.10:FF:000007">
    <property type="entry name" value="Glycine dehydrogenase (decarboxylating), mitochondrial"/>
    <property type="match status" value="1"/>
</dbReference>
<dbReference type="FunFam" id="3.40.640.10:FF:000007">
    <property type="entry name" value="glycine dehydrogenase (Decarboxylating), mitochondrial"/>
    <property type="match status" value="1"/>
</dbReference>
<dbReference type="Gene3D" id="3.90.1150.10">
    <property type="entry name" value="Aspartate Aminotransferase, domain 1"/>
    <property type="match status" value="2"/>
</dbReference>
<dbReference type="Gene3D" id="3.40.640.10">
    <property type="entry name" value="Type I PLP-dependent aspartate aminotransferase-like (Major domain)"/>
    <property type="match status" value="2"/>
</dbReference>
<dbReference type="HAMAP" id="MF_00711">
    <property type="entry name" value="GcvP"/>
    <property type="match status" value="1"/>
</dbReference>
<dbReference type="InterPro" id="IPR003437">
    <property type="entry name" value="GcvP"/>
</dbReference>
<dbReference type="InterPro" id="IPR049316">
    <property type="entry name" value="GDC-P_C"/>
</dbReference>
<dbReference type="InterPro" id="IPR049315">
    <property type="entry name" value="GDC-P_N"/>
</dbReference>
<dbReference type="InterPro" id="IPR020581">
    <property type="entry name" value="GDC_P"/>
</dbReference>
<dbReference type="InterPro" id="IPR015424">
    <property type="entry name" value="PyrdxlP-dep_Trfase"/>
</dbReference>
<dbReference type="InterPro" id="IPR015421">
    <property type="entry name" value="PyrdxlP-dep_Trfase_major"/>
</dbReference>
<dbReference type="InterPro" id="IPR015422">
    <property type="entry name" value="PyrdxlP-dep_Trfase_small"/>
</dbReference>
<dbReference type="NCBIfam" id="TIGR00461">
    <property type="entry name" value="gcvP"/>
    <property type="match status" value="1"/>
</dbReference>
<dbReference type="NCBIfam" id="NF003346">
    <property type="entry name" value="PRK04366.1"/>
    <property type="match status" value="1"/>
</dbReference>
<dbReference type="PANTHER" id="PTHR11773:SF13">
    <property type="entry name" value="GLYCINE DEHYDROGENASE (DECARBOXYLATING)"/>
    <property type="match status" value="1"/>
</dbReference>
<dbReference type="PANTHER" id="PTHR11773">
    <property type="entry name" value="GLYCINE DEHYDROGENASE, DECARBOXYLATING"/>
    <property type="match status" value="1"/>
</dbReference>
<dbReference type="Pfam" id="PF21478">
    <property type="entry name" value="GcvP2_C"/>
    <property type="match status" value="1"/>
</dbReference>
<dbReference type="Pfam" id="PF02347">
    <property type="entry name" value="GDC-P"/>
    <property type="match status" value="2"/>
</dbReference>
<dbReference type="SUPFAM" id="SSF53383">
    <property type="entry name" value="PLP-dependent transferases"/>
    <property type="match status" value="2"/>
</dbReference>
<reference key="1">
    <citation type="submission" date="2006-12" db="EMBL/GenBank/DDBJ databases">
        <title>Complete sequence of Shewanella amazonensis SB2B.</title>
        <authorList>
            <consortium name="US DOE Joint Genome Institute"/>
            <person name="Copeland A."/>
            <person name="Lucas S."/>
            <person name="Lapidus A."/>
            <person name="Barry K."/>
            <person name="Detter J.C."/>
            <person name="Glavina del Rio T."/>
            <person name="Hammon N."/>
            <person name="Israni S."/>
            <person name="Dalin E."/>
            <person name="Tice H."/>
            <person name="Pitluck S."/>
            <person name="Munk A.C."/>
            <person name="Brettin T."/>
            <person name="Bruce D."/>
            <person name="Han C."/>
            <person name="Tapia R."/>
            <person name="Gilna P."/>
            <person name="Schmutz J."/>
            <person name="Larimer F."/>
            <person name="Land M."/>
            <person name="Hauser L."/>
            <person name="Kyrpides N."/>
            <person name="Mikhailova N."/>
            <person name="Fredrickson J."/>
            <person name="Richardson P."/>
        </authorList>
    </citation>
    <scope>NUCLEOTIDE SEQUENCE [LARGE SCALE GENOMIC DNA]</scope>
    <source>
        <strain>ATCC BAA-1098 / SB2B</strain>
    </source>
</reference>
<sequence length="962" mass="104438">MTKQTLTELEQHELFLTRHIGPDADEQQAMLNYVGAESLEDLTAQIVPESIRLGRELNVGASNGEAAGLAYIRQLADKNQVFKSYIGMGYHGTEVPNVILRNVLENPGWYTAYTPYQPEIAQGRLEAILNFQQLSIDLTGLDLASASLLDEATAAAEAMALAKRVSKAKKANTFFVADDVFPQTLDVVKTRAECFGFDIVTGPAAEAANHDDLFGALFQYTNRQGQLTDFTELFAQLRAKNVIVTVGADIMSLVLLKSPGAMGADVVFGSAQRFGVPMGFGGPHAAFFVSKDEHKRSMPGRIIGVSKDTRGKTALRMAMQTREQHIRREKANSNICTAQVLLANMASFYAVFHGPQGLKVIANRIHRLTDILAAGLAAKGVTVLNTQWFDTLSFKVDVDAVRARALAAGVNLRYDADGVVGVSLAETTTRADVAELFDIILGAGHGLDVAAIDADILAKGSSSIPAALVREEAFLTHPTFNSYHSETEMMRYIKRLENKDLALNHSMISLGSCTMKLNAAVEMIPVSWPEFANMHPFCPSEQAQGYTQLIGELSDWLVDITGYDAVCMQPNSGAQGEYAGLLAIRKYHESRGEGHRDVCLIPQSAHGTNPASAQLAGMKVVVTACDKQGNVDLDDLRAKAAEVAENLSCIMITYPSTHGVYEETVREICDIIHQHGGQVYLDGANMNAQVGLTAPGFIGADVSHLNLHKTFAIPHGGGGPGMGPIGVKKHLAPFVAGHAVVKQGIESDNNGAVSAAPFGSAGILPISWMYIKLLGSKGLKQSTQTAMLNANYLTKKLSEHYPVLYRGRNDRIAHECIIDMRPLKEASGVTEMDVAKRLNDYGFHAPTMSFPVAGTLMIEPTESESKAELDRFIEAMVAIRGEIARVESGEWPVDNNPLANAPHTMDDIMDPAFDSRPYSRELAVFPTESVRANKFWPTVNRIDDVYGDRNLFCACVPMSDYE</sequence>
<evidence type="ECO:0000255" key="1">
    <source>
        <dbReference type="HAMAP-Rule" id="MF_00711"/>
    </source>
</evidence>
<protein>
    <recommendedName>
        <fullName evidence="1">Glycine dehydrogenase (decarboxylating)</fullName>
        <ecNumber evidence="1">1.4.4.2</ecNumber>
    </recommendedName>
    <alternativeName>
        <fullName evidence="1">Glycine cleavage system P-protein</fullName>
    </alternativeName>
    <alternativeName>
        <fullName evidence="1">Glycine decarboxylase</fullName>
    </alternativeName>
    <alternativeName>
        <fullName evidence="1">Glycine dehydrogenase (aminomethyl-transferring)</fullName>
    </alternativeName>
</protein>
<proteinExistence type="inferred from homology"/>